<proteinExistence type="inferred from homology"/>
<organism>
    <name type="scientific">Cavia porcellus</name>
    <name type="common">Guinea pig</name>
    <dbReference type="NCBI Taxonomy" id="10141"/>
    <lineage>
        <taxon>Eukaryota</taxon>
        <taxon>Metazoa</taxon>
        <taxon>Chordata</taxon>
        <taxon>Craniata</taxon>
        <taxon>Vertebrata</taxon>
        <taxon>Euteleostomi</taxon>
        <taxon>Mammalia</taxon>
        <taxon>Eutheria</taxon>
        <taxon>Euarchontoglires</taxon>
        <taxon>Glires</taxon>
        <taxon>Rodentia</taxon>
        <taxon>Hystricomorpha</taxon>
        <taxon>Caviidae</taxon>
        <taxon>Cavia</taxon>
    </lineage>
</organism>
<gene>
    <name type="primary">IL10</name>
</gene>
<reference key="1">
    <citation type="journal article" date="1998" name="Cytokine">
        <title>Spontaneous cytokine gene expression in normal guinea pig blood and tissues.</title>
        <authorList>
            <person name="Scarozza A.M."/>
            <person name="Ramsingh A.I."/>
            <person name="Wicher V."/>
            <person name="Wicher K."/>
        </authorList>
    </citation>
    <scope>NUCLEOTIDE SEQUENCE [GENOMIC DNA]</scope>
</reference>
<evidence type="ECO:0000250" key="1"/>
<evidence type="ECO:0000250" key="2">
    <source>
        <dbReference type="UniProtKB" id="P18893"/>
    </source>
</evidence>
<evidence type="ECO:0000250" key="3">
    <source>
        <dbReference type="UniProtKB" id="P22301"/>
    </source>
</evidence>
<evidence type="ECO:0000255" key="4"/>
<evidence type="ECO:0000305" key="5"/>
<sequence>MPGSALLCCLALLAGVKASQGTNTQSEDSCAHFPAGLPHMLRELRAAFGRVKTFFQTQDQLDNVLLNKSLLEDFKGYLGCQALSEMIQFYLVEVMPQAEKHGPEIKEHLNSLGEKLKTLRMRLRRCHRFLPCENKSKAVEQVKSDFNKLQDQGVYKAMNEFDIFINCIEAYMMIKMKS</sequence>
<feature type="signal peptide" evidence="4">
    <location>
        <begin position="1"/>
        <end position="18"/>
    </location>
</feature>
<feature type="chain" id="PRO_0000015355" description="Interleukin-10">
    <location>
        <begin position="19"/>
        <end position="178"/>
    </location>
</feature>
<feature type="glycosylation site" description="N-linked (GlcNAc...) asparagine" evidence="4">
    <location>
        <position position="67"/>
    </location>
</feature>
<feature type="glycosylation site" description="N-linked (GlcNAc...) asparagine" evidence="4">
    <location>
        <position position="134"/>
    </location>
</feature>
<feature type="disulfide bond" evidence="1">
    <location>
        <begin position="30"/>
        <end position="126"/>
    </location>
</feature>
<feature type="disulfide bond" evidence="1">
    <location>
        <begin position="80"/>
        <end position="132"/>
    </location>
</feature>
<name>IL10_CAVPO</name>
<keyword id="KW-0202">Cytokine</keyword>
<keyword id="KW-1015">Disulfide bond</keyword>
<keyword id="KW-0325">Glycoprotein</keyword>
<keyword id="KW-1185">Reference proteome</keyword>
<keyword id="KW-0964">Secreted</keyword>
<keyword id="KW-0732">Signal</keyword>
<accession>Q9Z1Y5</accession>
<comment type="function">
    <text evidence="2 3">Major immune regulatory cytokine that acts on many cells of the immune system where it has profound anti-inflammatory functions, limiting excessive tissue disruption caused by inflammation. Mechanistically, IL10 binds to its heterotetrameric receptor comprising IL10RA and IL10RB leading to JAK1 and STAT2-mediated phosphorylation of STAT3. In turn, STAT3 translocates to the nucleus where it drives expression of anti-inflammatory mediators. Targets antigen-presenting cells (APCs) such as macrophages and monocytes and inhibits their release of pro-inflammatory cytokines including granulocyte-macrophage colony-stimulating factor /GM-CSF, granulocyte colony-stimulating factor/G-CSF, IL-1 alpha, IL-1 beta, IL-6, IL-8 and TNF-alpha. Also interferes with antigen presentation by reducing the expression of MHC-class II and co-stimulatory molecules, thereby inhibiting their ability to induce T cell activation (By similarity). In addition, controls the inflammatory response of macrophages by reprogramming essential metabolic pathways including mTOR signaling (By similarity).</text>
</comment>
<comment type="subunit">
    <text evidence="3">Homodimer. Interacts with IL10RA and IL10RB.</text>
</comment>
<comment type="subcellular location">
    <subcellularLocation>
        <location evidence="3">Secreted</location>
    </subcellularLocation>
</comment>
<comment type="similarity">
    <text evidence="5">Belongs to the IL-10 family.</text>
</comment>
<dbReference type="EMBL" id="AF097510">
    <property type="protein sequence ID" value="AAC83808.1"/>
    <property type="molecule type" value="Genomic_DNA"/>
</dbReference>
<dbReference type="SMR" id="Q9Z1Y5"/>
<dbReference type="FunCoup" id="Q9Z1Y5">
    <property type="interactions" value="680"/>
</dbReference>
<dbReference type="STRING" id="10141.ENSCPOP00000033012"/>
<dbReference type="GlyCosmos" id="Q9Z1Y5">
    <property type="glycosylation" value="2 sites, No reported glycans"/>
</dbReference>
<dbReference type="InParanoid" id="Q9Z1Y5"/>
<dbReference type="Proteomes" id="UP000005447">
    <property type="component" value="Unassembled WGS sequence"/>
</dbReference>
<dbReference type="GO" id="GO:0005615">
    <property type="term" value="C:extracellular space"/>
    <property type="evidence" value="ECO:0000250"/>
    <property type="project" value="UniProtKB"/>
</dbReference>
<dbReference type="GO" id="GO:0005125">
    <property type="term" value="F:cytokine activity"/>
    <property type="evidence" value="ECO:0007669"/>
    <property type="project" value="UniProtKB-KW"/>
</dbReference>
<dbReference type="GO" id="GO:0006955">
    <property type="term" value="P:immune response"/>
    <property type="evidence" value="ECO:0007669"/>
    <property type="project" value="InterPro"/>
</dbReference>
<dbReference type="GO" id="GO:0030889">
    <property type="term" value="P:negative regulation of B cell proliferation"/>
    <property type="evidence" value="ECO:0000250"/>
    <property type="project" value="UniProtKB"/>
</dbReference>
<dbReference type="GO" id="GO:0002719">
    <property type="term" value="P:negative regulation of cytokine production involved in immune response"/>
    <property type="evidence" value="ECO:0000250"/>
    <property type="project" value="UniProtKB"/>
</dbReference>
<dbReference type="GO" id="GO:0050728">
    <property type="term" value="P:negative regulation of inflammatory response"/>
    <property type="evidence" value="ECO:0000250"/>
    <property type="project" value="UniProtKB"/>
</dbReference>
<dbReference type="GO" id="GO:0032715">
    <property type="term" value="P:negative regulation of interleukin-6 production"/>
    <property type="evidence" value="ECO:0000250"/>
    <property type="project" value="UniProtKB"/>
</dbReference>
<dbReference type="GO" id="GO:0051045">
    <property type="term" value="P:negative regulation of membrane protein ectodomain proteolysis"/>
    <property type="evidence" value="ECO:0000250"/>
    <property type="project" value="UniProtKB"/>
</dbReference>
<dbReference type="GO" id="GO:0002904">
    <property type="term" value="P:positive regulation of B cell apoptotic process"/>
    <property type="evidence" value="ECO:0000250"/>
    <property type="project" value="UniProtKB"/>
</dbReference>
<dbReference type="GO" id="GO:0001819">
    <property type="term" value="P:positive regulation of cytokine production"/>
    <property type="evidence" value="ECO:0000250"/>
    <property type="project" value="UniProtKB"/>
</dbReference>
<dbReference type="GO" id="GO:0051091">
    <property type="term" value="P:positive regulation of DNA-binding transcription factor activity"/>
    <property type="evidence" value="ECO:0000250"/>
    <property type="project" value="UniProtKB"/>
</dbReference>
<dbReference type="GO" id="GO:0045893">
    <property type="term" value="P:positive regulation of DNA-templated transcription"/>
    <property type="evidence" value="ECO:0000250"/>
    <property type="project" value="UniProtKB"/>
</dbReference>
<dbReference type="GO" id="GO:0051384">
    <property type="term" value="P:response to glucocorticoid"/>
    <property type="evidence" value="ECO:0000250"/>
    <property type="project" value="UniProtKB"/>
</dbReference>
<dbReference type="GO" id="GO:0002237">
    <property type="term" value="P:response to molecule of bacterial origin"/>
    <property type="evidence" value="ECO:0000250"/>
    <property type="project" value="UniProtKB"/>
</dbReference>
<dbReference type="FunFam" id="1.20.1250.10:FF:000011">
    <property type="entry name" value="Interleukin-10"/>
    <property type="match status" value="1"/>
</dbReference>
<dbReference type="Gene3D" id="1.20.1250.10">
    <property type="match status" value="1"/>
</dbReference>
<dbReference type="InterPro" id="IPR009079">
    <property type="entry name" value="4_helix_cytokine-like_core"/>
</dbReference>
<dbReference type="InterPro" id="IPR000098">
    <property type="entry name" value="IL-10"/>
</dbReference>
<dbReference type="InterPro" id="IPR020443">
    <property type="entry name" value="IL-10/19/20/24/26"/>
</dbReference>
<dbReference type="InterPro" id="IPR020423">
    <property type="entry name" value="IL-10_CS"/>
</dbReference>
<dbReference type="PANTHER" id="PTHR48482:SF5">
    <property type="entry name" value="INTERLEUKIN-10"/>
    <property type="match status" value="1"/>
</dbReference>
<dbReference type="PANTHER" id="PTHR48482">
    <property type="entry name" value="INTERLEUKIN-19-RELATED"/>
    <property type="match status" value="1"/>
</dbReference>
<dbReference type="Pfam" id="PF00726">
    <property type="entry name" value="IL10"/>
    <property type="match status" value="1"/>
</dbReference>
<dbReference type="PRINTS" id="PR01294">
    <property type="entry name" value="INTRLEUKIN10"/>
</dbReference>
<dbReference type="SMART" id="SM00188">
    <property type="entry name" value="IL10"/>
    <property type="match status" value="1"/>
</dbReference>
<dbReference type="SUPFAM" id="SSF47266">
    <property type="entry name" value="4-helical cytokines"/>
    <property type="match status" value="1"/>
</dbReference>
<dbReference type="PROSITE" id="PS00520">
    <property type="entry name" value="INTERLEUKIN_10"/>
    <property type="match status" value="1"/>
</dbReference>
<protein>
    <recommendedName>
        <fullName>Interleukin-10</fullName>
        <shortName>IL-10</shortName>
    </recommendedName>
    <alternativeName>
        <fullName>Cytokine synthesis inhibitory factor</fullName>
        <shortName>CSIF</shortName>
    </alternativeName>
</protein>